<keyword id="KW-0414">Isoprene biosynthesis</keyword>
<keyword id="KW-0464">Manganese</keyword>
<keyword id="KW-0479">Metal-binding</keyword>
<keyword id="KW-0521">NADP</keyword>
<keyword id="KW-0560">Oxidoreductase</keyword>
<keyword id="KW-1185">Reference proteome</keyword>
<organism>
    <name type="scientific">Trichlorobacter lovleyi (strain ATCC BAA-1151 / DSM 17278 / SZ)</name>
    <name type="common">Geobacter lovleyi</name>
    <dbReference type="NCBI Taxonomy" id="398767"/>
    <lineage>
        <taxon>Bacteria</taxon>
        <taxon>Pseudomonadati</taxon>
        <taxon>Thermodesulfobacteriota</taxon>
        <taxon>Desulfuromonadia</taxon>
        <taxon>Geobacterales</taxon>
        <taxon>Geobacteraceae</taxon>
        <taxon>Trichlorobacter</taxon>
    </lineage>
</organism>
<name>DXR_TRIL1</name>
<proteinExistence type="inferred from homology"/>
<comment type="function">
    <text evidence="1">Catalyzes the NADPH-dependent rearrangement and reduction of 1-deoxy-D-xylulose-5-phosphate (DXP) to 2-C-methyl-D-erythritol 4-phosphate (MEP).</text>
</comment>
<comment type="catalytic activity">
    <reaction evidence="1">
        <text>2-C-methyl-D-erythritol 4-phosphate + NADP(+) = 1-deoxy-D-xylulose 5-phosphate + NADPH + H(+)</text>
        <dbReference type="Rhea" id="RHEA:13717"/>
        <dbReference type="ChEBI" id="CHEBI:15378"/>
        <dbReference type="ChEBI" id="CHEBI:57783"/>
        <dbReference type="ChEBI" id="CHEBI:57792"/>
        <dbReference type="ChEBI" id="CHEBI:58262"/>
        <dbReference type="ChEBI" id="CHEBI:58349"/>
        <dbReference type="EC" id="1.1.1.267"/>
    </reaction>
    <physiologicalReaction direction="right-to-left" evidence="1">
        <dbReference type="Rhea" id="RHEA:13719"/>
    </physiologicalReaction>
</comment>
<comment type="cofactor">
    <cofactor evidence="1">
        <name>Mg(2+)</name>
        <dbReference type="ChEBI" id="CHEBI:18420"/>
    </cofactor>
    <cofactor evidence="1">
        <name>Mn(2+)</name>
        <dbReference type="ChEBI" id="CHEBI:29035"/>
    </cofactor>
</comment>
<comment type="pathway">
    <text evidence="1">Isoprenoid biosynthesis; isopentenyl diphosphate biosynthesis via DXP pathway; isopentenyl diphosphate from 1-deoxy-D-xylulose 5-phosphate: step 1/6.</text>
</comment>
<comment type="similarity">
    <text evidence="1">Belongs to the DXR family.</text>
</comment>
<feature type="chain" id="PRO_1000098498" description="1-deoxy-D-xylulose 5-phosphate reductoisomerase">
    <location>
        <begin position="1"/>
        <end position="390"/>
    </location>
</feature>
<feature type="binding site" evidence="1">
    <location>
        <position position="10"/>
    </location>
    <ligand>
        <name>NADPH</name>
        <dbReference type="ChEBI" id="CHEBI:57783"/>
    </ligand>
</feature>
<feature type="binding site" evidence="1">
    <location>
        <position position="11"/>
    </location>
    <ligand>
        <name>NADPH</name>
        <dbReference type="ChEBI" id="CHEBI:57783"/>
    </ligand>
</feature>
<feature type="binding site" evidence="1">
    <location>
        <position position="12"/>
    </location>
    <ligand>
        <name>NADPH</name>
        <dbReference type="ChEBI" id="CHEBI:57783"/>
    </ligand>
</feature>
<feature type="binding site" evidence="1">
    <location>
        <position position="13"/>
    </location>
    <ligand>
        <name>NADPH</name>
        <dbReference type="ChEBI" id="CHEBI:57783"/>
    </ligand>
</feature>
<feature type="binding site" evidence="1">
    <location>
        <position position="36"/>
    </location>
    <ligand>
        <name>NADPH</name>
        <dbReference type="ChEBI" id="CHEBI:57783"/>
    </ligand>
</feature>
<feature type="binding site" evidence="1">
    <location>
        <position position="37"/>
    </location>
    <ligand>
        <name>NADPH</name>
        <dbReference type="ChEBI" id="CHEBI:57783"/>
    </ligand>
</feature>
<feature type="binding site" evidence="1">
    <location>
        <position position="38"/>
    </location>
    <ligand>
        <name>NADPH</name>
        <dbReference type="ChEBI" id="CHEBI:57783"/>
    </ligand>
</feature>
<feature type="binding site" evidence="1">
    <location>
        <position position="122"/>
    </location>
    <ligand>
        <name>NADPH</name>
        <dbReference type="ChEBI" id="CHEBI:57783"/>
    </ligand>
</feature>
<feature type="binding site" evidence="1">
    <location>
        <position position="123"/>
    </location>
    <ligand>
        <name>1-deoxy-D-xylulose 5-phosphate</name>
        <dbReference type="ChEBI" id="CHEBI:57792"/>
    </ligand>
</feature>
<feature type="binding site" evidence="1">
    <location>
        <position position="124"/>
    </location>
    <ligand>
        <name>NADPH</name>
        <dbReference type="ChEBI" id="CHEBI:57783"/>
    </ligand>
</feature>
<feature type="binding site" evidence="1">
    <location>
        <position position="148"/>
    </location>
    <ligand>
        <name>Mn(2+)</name>
        <dbReference type="ChEBI" id="CHEBI:29035"/>
    </ligand>
</feature>
<feature type="binding site" evidence="1">
    <location>
        <position position="149"/>
    </location>
    <ligand>
        <name>1-deoxy-D-xylulose 5-phosphate</name>
        <dbReference type="ChEBI" id="CHEBI:57792"/>
    </ligand>
</feature>
<feature type="binding site" evidence="1">
    <location>
        <position position="150"/>
    </location>
    <ligand>
        <name>1-deoxy-D-xylulose 5-phosphate</name>
        <dbReference type="ChEBI" id="CHEBI:57792"/>
    </ligand>
</feature>
<feature type="binding site" evidence="1">
    <location>
        <position position="150"/>
    </location>
    <ligand>
        <name>Mn(2+)</name>
        <dbReference type="ChEBI" id="CHEBI:29035"/>
    </ligand>
</feature>
<feature type="binding site" evidence="1">
    <location>
        <position position="174"/>
    </location>
    <ligand>
        <name>1-deoxy-D-xylulose 5-phosphate</name>
        <dbReference type="ChEBI" id="CHEBI:57792"/>
    </ligand>
</feature>
<feature type="binding site" evidence="1">
    <location>
        <position position="197"/>
    </location>
    <ligand>
        <name>1-deoxy-D-xylulose 5-phosphate</name>
        <dbReference type="ChEBI" id="CHEBI:57792"/>
    </ligand>
</feature>
<feature type="binding site" evidence="1">
    <location>
        <position position="203"/>
    </location>
    <ligand>
        <name>NADPH</name>
        <dbReference type="ChEBI" id="CHEBI:57783"/>
    </ligand>
</feature>
<feature type="binding site" evidence="1">
    <location>
        <position position="210"/>
    </location>
    <ligand>
        <name>1-deoxy-D-xylulose 5-phosphate</name>
        <dbReference type="ChEBI" id="CHEBI:57792"/>
    </ligand>
</feature>
<feature type="binding site" evidence="1">
    <location>
        <position position="215"/>
    </location>
    <ligand>
        <name>1-deoxy-D-xylulose 5-phosphate</name>
        <dbReference type="ChEBI" id="CHEBI:57792"/>
    </ligand>
</feature>
<feature type="binding site" evidence="1">
    <location>
        <position position="216"/>
    </location>
    <ligand>
        <name>1-deoxy-D-xylulose 5-phosphate</name>
        <dbReference type="ChEBI" id="CHEBI:57792"/>
    </ligand>
</feature>
<feature type="binding site" evidence="1">
    <location>
        <position position="219"/>
    </location>
    <ligand>
        <name>1-deoxy-D-xylulose 5-phosphate</name>
        <dbReference type="ChEBI" id="CHEBI:57792"/>
    </ligand>
</feature>
<feature type="binding site" evidence="1">
    <location>
        <position position="219"/>
    </location>
    <ligand>
        <name>Mn(2+)</name>
        <dbReference type="ChEBI" id="CHEBI:29035"/>
    </ligand>
</feature>
<reference key="1">
    <citation type="submission" date="2008-05" db="EMBL/GenBank/DDBJ databases">
        <title>Complete sequence of chromosome of Geobacter lovleyi SZ.</title>
        <authorList>
            <consortium name="US DOE Joint Genome Institute"/>
            <person name="Lucas S."/>
            <person name="Copeland A."/>
            <person name="Lapidus A."/>
            <person name="Glavina del Rio T."/>
            <person name="Dalin E."/>
            <person name="Tice H."/>
            <person name="Bruce D."/>
            <person name="Goodwin L."/>
            <person name="Pitluck S."/>
            <person name="Chertkov O."/>
            <person name="Meincke L."/>
            <person name="Brettin T."/>
            <person name="Detter J.C."/>
            <person name="Han C."/>
            <person name="Tapia R."/>
            <person name="Kuske C.R."/>
            <person name="Schmutz J."/>
            <person name="Larimer F."/>
            <person name="Land M."/>
            <person name="Hauser L."/>
            <person name="Kyrpides N."/>
            <person name="Mikhailova N."/>
            <person name="Sung Y."/>
            <person name="Fletcher K.E."/>
            <person name="Ritalahti K.M."/>
            <person name="Loeffler F.E."/>
            <person name="Richardson P."/>
        </authorList>
    </citation>
    <scope>NUCLEOTIDE SEQUENCE [LARGE SCALE GENOMIC DNA]</scope>
    <source>
        <strain>ATCC BAA-1151 / DSM 17278 / SZ</strain>
    </source>
</reference>
<gene>
    <name evidence="1" type="primary">dxr</name>
    <name type="ordered locus">Glov_2714</name>
</gene>
<dbReference type="EC" id="1.1.1.267" evidence="1"/>
<dbReference type="EMBL" id="CP001089">
    <property type="protein sequence ID" value="ACD96427.1"/>
    <property type="molecule type" value="Genomic_DNA"/>
</dbReference>
<dbReference type="RefSeq" id="WP_012470756.1">
    <property type="nucleotide sequence ID" value="NC_010814.1"/>
</dbReference>
<dbReference type="SMR" id="B3E7B0"/>
<dbReference type="STRING" id="398767.Glov_2714"/>
<dbReference type="KEGG" id="glo:Glov_2714"/>
<dbReference type="eggNOG" id="COG0743">
    <property type="taxonomic scope" value="Bacteria"/>
</dbReference>
<dbReference type="HOGENOM" id="CLU_035714_4_0_7"/>
<dbReference type="OrthoDB" id="9806546at2"/>
<dbReference type="UniPathway" id="UPA00056">
    <property type="reaction ID" value="UER00092"/>
</dbReference>
<dbReference type="Proteomes" id="UP000002420">
    <property type="component" value="Chromosome"/>
</dbReference>
<dbReference type="GO" id="GO:0030604">
    <property type="term" value="F:1-deoxy-D-xylulose-5-phosphate reductoisomerase activity"/>
    <property type="evidence" value="ECO:0007669"/>
    <property type="project" value="UniProtKB-UniRule"/>
</dbReference>
<dbReference type="GO" id="GO:0030145">
    <property type="term" value="F:manganese ion binding"/>
    <property type="evidence" value="ECO:0007669"/>
    <property type="project" value="TreeGrafter"/>
</dbReference>
<dbReference type="GO" id="GO:0070402">
    <property type="term" value="F:NADPH binding"/>
    <property type="evidence" value="ECO:0007669"/>
    <property type="project" value="InterPro"/>
</dbReference>
<dbReference type="GO" id="GO:0051484">
    <property type="term" value="P:isopentenyl diphosphate biosynthetic process, methylerythritol 4-phosphate pathway involved in terpenoid biosynthetic process"/>
    <property type="evidence" value="ECO:0007669"/>
    <property type="project" value="TreeGrafter"/>
</dbReference>
<dbReference type="FunFam" id="3.40.50.720:FF:000045">
    <property type="entry name" value="1-deoxy-D-xylulose 5-phosphate reductoisomerase"/>
    <property type="match status" value="1"/>
</dbReference>
<dbReference type="Gene3D" id="1.10.1740.10">
    <property type="match status" value="1"/>
</dbReference>
<dbReference type="Gene3D" id="3.40.50.720">
    <property type="entry name" value="NAD(P)-binding Rossmann-like Domain"/>
    <property type="match status" value="1"/>
</dbReference>
<dbReference type="HAMAP" id="MF_00183">
    <property type="entry name" value="DXP_reductoisom"/>
    <property type="match status" value="1"/>
</dbReference>
<dbReference type="InterPro" id="IPR003821">
    <property type="entry name" value="DXP_reductoisomerase"/>
</dbReference>
<dbReference type="InterPro" id="IPR013644">
    <property type="entry name" value="DXP_reductoisomerase_C"/>
</dbReference>
<dbReference type="InterPro" id="IPR013512">
    <property type="entry name" value="DXP_reductoisomerase_N"/>
</dbReference>
<dbReference type="InterPro" id="IPR026877">
    <property type="entry name" value="DXPR_C"/>
</dbReference>
<dbReference type="InterPro" id="IPR036169">
    <property type="entry name" value="DXPR_C_sf"/>
</dbReference>
<dbReference type="InterPro" id="IPR036291">
    <property type="entry name" value="NAD(P)-bd_dom_sf"/>
</dbReference>
<dbReference type="NCBIfam" id="TIGR00243">
    <property type="entry name" value="Dxr"/>
    <property type="match status" value="1"/>
</dbReference>
<dbReference type="NCBIfam" id="NF009114">
    <property type="entry name" value="PRK12464.1"/>
    <property type="match status" value="1"/>
</dbReference>
<dbReference type="PANTHER" id="PTHR30525">
    <property type="entry name" value="1-DEOXY-D-XYLULOSE 5-PHOSPHATE REDUCTOISOMERASE"/>
    <property type="match status" value="1"/>
</dbReference>
<dbReference type="PANTHER" id="PTHR30525:SF0">
    <property type="entry name" value="1-DEOXY-D-XYLULOSE 5-PHOSPHATE REDUCTOISOMERASE, CHLOROPLASTIC"/>
    <property type="match status" value="1"/>
</dbReference>
<dbReference type="Pfam" id="PF08436">
    <property type="entry name" value="DXP_redisom_C"/>
    <property type="match status" value="1"/>
</dbReference>
<dbReference type="Pfam" id="PF02670">
    <property type="entry name" value="DXP_reductoisom"/>
    <property type="match status" value="1"/>
</dbReference>
<dbReference type="Pfam" id="PF13288">
    <property type="entry name" value="DXPR_C"/>
    <property type="match status" value="1"/>
</dbReference>
<dbReference type="PIRSF" id="PIRSF006205">
    <property type="entry name" value="Dxp_reductismrs"/>
    <property type="match status" value="1"/>
</dbReference>
<dbReference type="SUPFAM" id="SSF69055">
    <property type="entry name" value="1-deoxy-D-xylulose-5-phosphate reductoisomerase, C-terminal domain"/>
    <property type="match status" value="1"/>
</dbReference>
<dbReference type="SUPFAM" id="SSF55347">
    <property type="entry name" value="Glyceraldehyde-3-phosphate dehydrogenase-like, C-terminal domain"/>
    <property type="match status" value="1"/>
</dbReference>
<dbReference type="SUPFAM" id="SSF51735">
    <property type="entry name" value="NAD(P)-binding Rossmann-fold domains"/>
    <property type="match status" value="1"/>
</dbReference>
<accession>B3E7B0</accession>
<protein>
    <recommendedName>
        <fullName evidence="1">1-deoxy-D-xylulose 5-phosphate reductoisomerase</fullName>
        <shortName evidence="1">DXP reductoisomerase</shortName>
        <ecNumber evidence="1">1.1.1.267</ecNumber>
    </recommendedName>
    <alternativeName>
        <fullName evidence="1">1-deoxyxylulose-5-phosphate reductoisomerase</fullName>
    </alternativeName>
    <alternativeName>
        <fullName evidence="1">2-C-methyl-D-erythritol 4-phosphate synthase</fullName>
    </alternativeName>
</protein>
<evidence type="ECO:0000255" key="1">
    <source>
        <dbReference type="HAMAP-Rule" id="MF_00183"/>
    </source>
</evidence>
<sequence length="390" mass="41910">MKQIAILGSTGSIGVSTLEIVAAHPDKFRVLSLSGAKNLDLLARQIRQFRPRLAAVADPADIPRLKELLSGVEVELTGGVEGLCAAATAPGVQMVVAAIVGAAGLVPTAAAIRAGIDVALANKETLVTAGHLFMELVERHKVKLYPVDSEHSAIFQSIEGHRSQDITKIILTASGGPFRETPLEKLQSVTIQDALNHPNWSMGRKITIDSATMMNKGLEVIEARWLFDAPAEKISVNIHPQSIIHSMVEYIDGCVIAQLGTPDMKAPIAYALSYPERVSTGVKPLDLTELSGLTFSKPDLERFPCLGLAYRALGEGESMPAVMNAANEVAVEAFLDGRISYLQIAALIEKTMDAHQAHRLGSIEEVLEADRWGRATARDICNTLQTGRCL</sequence>